<sequence length="251" mass="27951">MEKTKPAAPSSVPRHVAIIMDGNNRWAKKRLLPGVAGHKAGVDAVRAVIEVCAKSGVEVLTLFAFSSENWQRPAEEVGALMELFFSALRREAKRLDENNISLRIIGDRSRFHPELQAAMREAEAVTAGNNRFILQIAANYGGQWDIAQAAQRLAREVQAGHLRPEDITPGLLQTCLATGDLPLPDLCIRTGGEHRISNFLLWQLAYAELYFSDLYWPDFKHEAMRNALADFASRQRRFGKTSEQVEAGARA</sequence>
<protein>
    <recommendedName>
        <fullName evidence="1">Ditrans,polycis-undecaprenyl-diphosphate synthase ((2E,6E)-farnesyl-diphosphate specific)</fullName>
        <ecNumber evidence="1">2.5.1.31</ecNumber>
    </recommendedName>
    <alternativeName>
        <fullName evidence="1">Ditrans,polycis-undecaprenylcistransferase</fullName>
    </alternativeName>
    <alternativeName>
        <fullName evidence="1">Undecaprenyl diphosphate synthase</fullName>
        <shortName evidence="1">UDS</shortName>
    </alternativeName>
    <alternativeName>
        <fullName evidence="1">Undecaprenyl pyrophosphate synthase</fullName>
        <shortName evidence="1">UPP synthase</shortName>
    </alternativeName>
</protein>
<proteinExistence type="inferred from homology"/>
<dbReference type="EC" id="2.5.1.31" evidence="1"/>
<dbReference type="EMBL" id="AE015451">
    <property type="protein sequence ID" value="AAN67216.1"/>
    <property type="molecule type" value="Genomic_DNA"/>
</dbReference>
<dbReference type="RefSeq" id="NP_743752.1">
    <property type="nucleotide sequence ID" value="NC_002947.4"/>
</dbReference>
<dbReference type="RefSeq" id="WP_010952675.1">
    <property type="nucleotide sequence ID" value="NZ_CP169744.1"/>
</dbReference>
<dbReference type="SMR" id="Q88MH6"/>
<dbReference type="STRING" id="160488.PP_1595"/>
<dbReference type="PaxDb" id="160488-PP_1595"/>
<dbReference type="GeneID" id="83681925"/>
<dbReference type="KEGG" id="ppu:PP_1595"/>
<dbReference type="PATRIC" id="fig|160488.4.peg.1686"/>
<dbReference type="eggNOG" id="COG0020">
    <property type="taxonomic scope" value="Bacteria"/>
</dbReference>
<dbReference type="HOGENOM" id="CLU_038505_1_1_6"/>
<dbReference type="OrthoDB" id="4191603at2"/>
<dbReference type="PhylomeDB" id="Q88MH6"/>
<dbReference type="BioCyc" id="PPUT160488:G1G01-1692-MONOMER"/>
<dbReference type="Proteomes" id="UP000000556">
    <property type="component" value="Chromosome"/>
</dbReference>
<dbReference type="GO" id="GO:0005829">
    <property type="term" value="C:cytosol"/>
    <property type="evidence" value="ECO:0007669"/>
    <property type="project" value="TreeGrafter"/>
</dbReference>
<dbReference type="GO" id="GO:0008834">
    <property type="term" value="F:ditrans,polycis-undecaprenyl-diphosphate synthase [(2E,6E)-farnesyl-diphosphate specific] activity"/>
    <property type="evidence" value="ECO:0007669"/>
    <property type="project" value="UniProtKB-UniRule"/>
</dbReference>
<dbReference type="GO" id="GO:0000287">
    <property type="term" value="F:magnesium ion binding"/>
    <property type="evidence" value="ECO:0007669"/>
    <property type="project" value="UniProtKB-UniRule"/>
</dbReference>
<dbReference type="GO" id="GO:0071555">
    <property type="term" value="P:cell wall organization"/>
    <property type="evidence" value="ECO:0007669"/>
    <property type="project" value="UniProtKB-KW"/>
</dbReference>
<dbReference type="GO" id="GO:0009252">
    <property type="term" value="P:peptidoglycan biosynthetic process"/>
    <property type="evidence" value="ECO:0007669"/>
    <property type="project" value="UniProtKB-UniRule"/>
</dbReference>
<dbReference type="GO" id="GO:0016094">
    <property type="term" value="P:polyprenol biosynthetic process"/>
    <property type="evidence" value="ECO:0007669"/>
    <property type="project" value="TreeGrafter"/>
</dbReference>
<dbReference type="GO" id="GO:0008360">
    <property type="term" value="P:regulation of cell shape"/>
    <property type="evidence" value="ECO:0007669"/>
    <property type="project" value="UniProtKB-KW"/>
</dbReference>
<dbReference type="CDD" id="cd00475">
    <property type="entry name" value="Cis_IPPS"/>
    <property type="match status" value="1"/>
</dbReference>
<dbReference type="FunFam" id="3.40.1180.10:FF:000001">
    <property type="entry name" value="(2E,6E)-farnesyl-diphosphate-specific ditrans,polycis-undecaprenyl-diphosphate synthase"/>
    <property type="match status" value="1"/>
</dbReference>
<dbReference type="Gene3D" id="3.40.1180.10">
    <property type="entry name" value="Decaprenyl diphosphate synthase-like"/>
    <property type="match status" value="1"/>
</dbReference>
<dbReference type="HAMAP" id="MF_01139">
    <property type="entry name" value="ISPT"/>
    <property type="match status" value="1"/>
</dbReference>
<dbReference type="InterPro" id="IPR001441">
    <property type="entry name" value="UPP_synth-like"/>
</dbReference>
<dbReference type="InterPro" id="IPR018520">
    <property type="entry name" value="UPP_synth-like_CS"/>
</dbReference>
<dbReference type="InterPro" id="IPR036424">
    <property type="entry name" value="UPP_synth-like_sf"/>
</dbReference>
<dbReference type="NCBIfam" id="TIGR00055">
    <property type="entry name" value="uppS"/>
    <property type="match status" value="1"/>
</dbReference>
<dbReference type="PANTHER" id="PTHR10291:SF0">
    <property type="entry name" value="DEHYDRODOLICHYL DIPHOSPHATE SYNTHASE 2"/>
    <property type="match status" value="1"/>
</dbReference>
<dbReference type="PANTHER" id="PTHR10291">
    <property type="entry name" value="DEHYDRODOLICHYL DIPHOSPHATE SYNTHASE FAMILY MEMBER"/>
    <property type="match status" value="1"/>
</dbReference>
<dbReference type="Pfam" id="PF01255">
    <property type="entry name" value="Prenyltransf"/>
    <property type="match status" value="1"/>
</dbReference>
<dbReference type="SUPFAM" id="SSF64005">
    <property type="entry name" value="Undecaprenyl diphosphate synthase"/>
    <property type="match status" value="1"/>
</dbReference>
<dbReference type="PROSITE" id="PS01066">
    <property type="entry name" value="UPP_SYNTHASE"/>
    <property type="match status" value="1"/>
</dbReference>
<evidence type="ECO:0000255" key="1">
    <source>
        <dbReference type="HAMAP-Rule" id="MF_01139"/>
    </source>
</evidence>
<keyword id="KW-0133">Cell shape</keyword>
<keyword id="KW-0961">Cell wall biogenesis/degradation</keyword>
<keyword id="KW-0460">Magnesium</keyword>
<keyword id="KW-0479">Metal-binding</keyword>
<keyword id="KW-0573">Peptidoglycan synthesis</keyword>
<keyword id="KW-1185">Reference proteome</keyword>
<keyword id="KW-0808">Transferase</keyword>
<reference key="1">
    <citation type="journal article" date="2002" name="Environ. Microbiol.">
        <title>Complete genome sequence and comparative analysis of the metabolically versatile Pseudomonas putida KT2440.</title>
        <authorList>
            <person name="Nelson K.E."/>
            <person name="Weinel C."/>
            <person name="Paulsen I.T."/>
            <person name="Dodson R.J."/>
            <person name="Hilbert H."/>
            <person name="Martins dos Santos V.A.P."/>
            <person name="Fouts D.E."/>
            <person name="Gill S.R."/>
            <person name="Pop M."/>
            <person name="Holmes M."/>
            <person name="Brinkac L.M."/>
            <person name="Beanan M.J."/>
            <person name="DeBoy R.T."/>
            <person name="Daugherty S.C."/>
            <person name="Kolonay J.F."/>
            <person name="Madupu R."/>
            <person name="Nelson W.C."/>
            <person name="White O."/>
            <person name="Peterson J.D."/>
            <person name="Khouri H.M."/>
            <person name="Hance I."/>
            <person name="Chris Lee P."/>
            <person name="Holtzapple E.K."/>
            <person name="Scanlan D."/>
            <person name="Tran K."/>
            <person name="Moazzez A."/>
            <person name="Utterback T.R."/>
            <person name="Rizzo M."/>
            <person name="Lee K."/>
            <person name="Kosack D."/>
            <person name="Moestl D."/>
            <person name="Wedler H."/>
            <person name="Lauber J."/>
            <person name="Stjepandic D."/>
            <person name="Hoheisel J."/>
            <person name="Straetz M."/>
            <person name="Heim S."/>
            <person name="Kiewitz C."/>
            <person name="Eisen J.A."/>
            <person name="Timmis K.N."/>
            <person name="Duesterhoeft A."/>
            <person name="Tuemmler B."/>
            <person name="Fraser C.M."/>
        </authorList>
    </citation>
    <scope>NUCLEOTIDE SEQUENCE [LARGE SCALE GENOMIC DNA]</scope>
    <source>
        <strain>ATCC 47054 / DSM 6125 / CFBP 8728 / NCIMB 11950 / KT2440</strain>
    </source>
</reference>
<name>UPPS_PSEPK</name>
<comment type="function">
    <text evidence="1">Catalyzes the sequential condensation of isopentenyl diphosphate (IPP) with (2E,6E)-farnesyl diphosphate (E,E-FPP) to yield (2Z,6Z,10Z,14Z,18Z,22Z,26Z,30Z,34E,38E)-undecaprenyl diphosphate (di-trans,octa-cis-UPP). UPP is the precursor of glycosyl carrier lipid in the biosynthesis of bacterial cell wall polysaccharide components such as peptidoglycan and lipopolysaccharide.</text>
</comment>
<comment type="catalytic activity">
    <reaction evidence="1">
        <text>8 isopentenyl diphosphate + (2E,6E)-farnesyl diphosphate = di-trans,octa-cis-undecaprenyl diphosphate + 8 diphosphate</text>
        <dbReference type="Rhea" id="RHEA:27551"/>
        <dbReference type="ChEBI" id="CHEBI:33019"/>
        <dbReference type="ChEBI" id="CHEBI:58405"/>
        <dbReference type="ChEBI" id="CHEBI:128769"/>
        <dbReference type="ChEBI" id="CHEBI:175763"/>
        <dbReference type="EC" id="2.5.1.31"/>
    </reaction>
</comment>
<comment type="cofactor">
    <cofactor evidence="1">
        <name>Mg(2+)</name>
        <dbReference type="ChEBI" id="CHEBI:18420"/>
    </cofactor>
    <text evidence="1">Binds 2 magnesium ions per subunit.</text>
</comment>
<comment type="subunit">
    <text evidence="1">Homodimer.</text>
</comment>
<comment type="similarity">
    <text evidence="1">Belongs to the UPP synthase family.</text>
</comment>
<gene>
    <name evidence="1" type="primary">uppS</name>
    <name type="ordered locus">PP_1595</name>
</gene>
<organism>
    <name type="scientific">Pseudomonas putida (strain ATCC 47054 / DSM 6125 / CFBP 8728 / NCIMB 11950 / KT2440)</name>
    <dbReference type="NCBI Taxonomy" id="160488"/>
    <lineage>
        <taxon>Bacteria</taxon>
        <taxon>Pseudomonadati</taxon>
        <taxon>Pseudomonadota</taxon>
        <taxon>Gammaproteobacteria</taxon>
        <taxon>Pseudomonadales</taxon>
        <taxon>Pseudomonadaceae</taxon>
        <taxon>Pseudomonas</taxon>
    </lineage>
</organism>
<feature type="chain" id="PRO_0000123655" description="Ditrans,polycis-undecaprenyl-diphosphate synthase ((2E,6E)-farnesyl-diphosphate specific)">
    <location>
        <begin position="1"/>
        <end position="251"/>
    </location>
</feature>
<feature type="active site" evidence="1">
    <location>
        <position position="21"/>
    </location>
</feature>
<feature type="active site" description="Proton acceptor" evidence="1">
    <location>
        <position position="69"/>
    </location>
</feature>
<feature type="binding site" evidence="1">
    <location>
        <position position="21"/>
    </location>
    <ligand>
        <name>Mg(2+)</name>
        <dbReference type="ChEBI" id="CHEBI:18420"/>
    </ligand>
</feature>
<feature type="binding site" evidence="1">
    <location>
        <begin position="22"/>
        <end position="25"/>
    </location>
    <ligand>
        <name>substrate</name>
    </ligand>
</feature>
<feature type="binding site" evidence="1">
    <location>
        <position position="26"/>
    </location>
    <ligand>
        <name>substrate</name>
    </ligand>
</feature>
<feature type="binding site" evidence="1">
    <location>
        <position position="38"/>
    </location>
    <ligand>
        <name>substrate</name>
    </ligand>
</feature>
<feature type="binding site" evidence="1">
    <location>
        <begin position="66"/>
        <end position="68"/>
    </location>
    <ligand>
        <name>substrate</name>
    </ligand>
</feature>
<feature type="binding site" evidence="1">
    <location>
        <position position="70"/>
    </location>
    <ligand>
        <name>substrate</name>
    </ligand>
</feature>
<feature type="binding site" evidence="1">
    <location>
        <position position="72"/>
    </location>
    <ligand>
        <name>substrate</name>
    </ligand>
</feature>
<feature type="binding site" evidence="1">
    <location>
        <position position="189"/>
    </location>
    <ligand>
        <name>substrate</name>
    </ligand>
</feature>
<feature type="binding site" evidence="1">
    <location>
        <begin position="195"/>
        <end position="197"/>
    </location>
    <ligand>
        <name>substrate</name>
    </ligand>
</feature>
<feature type="binding site" evidence="1">
    <location>
        <position position="208"/>
    </location>
    <ligand>
        <name>Mg(2+)</name>
        <dbReference type="ChEBI" id="CHEBI:18420"/>
    </ligand>
</feature>
<accession>Q88MH6</accession>